<accession>Q7TNL3</accession>
<accession>B1AW01</accession>
<accession>Q3U3G3</accession>
<accession>Q811D6</accession>
<accession>Q8BKT1</accession>
<accession>Q9D7K3</accession>
<evidence type="ECO:0000250" key="1"/>
<evidence type="ECO:0000255" key="2">
    <source>
        <dbReference type="PROSITE-ProRule" id="PRU00159"/>
    </source>
</evidence>
<evidence type="ECO:0000255" key="3">
    <source>
        <dbReference type="PROSITE-ProRule" id="PRU10027"/>
    </source>
</evidence>
<evidence type="ECO:0000303" key="4">
    <source>
    </source>
</evidence>
<evidence type="ECO:0000305" key="5"/>
<comment type="function">
    <text evidence="1">May be a negative regulator of NF-kappa-B and p53-mediated gene transcription.</text>
</comment>
<comment type="catalytic activity">
    <reaction>
        <text>L-seryl-[protein] + ATP = O-phospho-L-seryl-[protein] + ADP + H(+)</text>
        <dbReference type="Rhea" id="RHEA:17989"/>
        <dbReference type="Rhea" id="RHEA-COMP:9863"/>
        <dbReference type="Rhea" id="RHEA-COMP:11604"/>
        <dbReference type="ChEBI" id="CHEBI:15378"/>
        <dbReference type="ChEBI" id="CHEBI:29999"/>
        <dbReference type="ChEBI" id="CHEBI:30616"/>
        <dbReference type="ChEBI" id="CHEBI:83421"/>
        <dbReference type="ChEBI" id="CHEBI:456216"/>
        <dbReference type="EC" id="2.7.11.1"/>
    </reaction>
</comment>
<comment type="catalytic activity">
    <reaction>
        <text>L-threonyl-[protein] + ATP = O-phospho-L-threonyl-[protein] + ADP + H(+)</text>
        <dbReference type="Rhea" id="RHEA:46608"/>
        <dbReference type="Rhea" id="RHEA-COMP:11060"/>
        <dbReference type="Rhea" id="RHEA-COMP:11605"/>
        <dbReference type="ChEBI" id="CHEBI:15378"/>
        <dbReference type="ChEBI" id="CHEBI:30013"/>
        <dbReference type="ChEBI" id="CHEBI:30616"/>
        <dbReference type="ChEBI" id="CHEBI:61977"/>
        <dbReference type="ChEBI" id="CHEBI:456216"/>
        <dbReference type="EC" id="2.7.11.1"/>
    </reaction>
</comment>
<comment type="interaction">
    <interactant intactId="EBI-15828080">
        <id>Q7TNL3-1</id>
    </interactant>
    <interactant intactId="EBI-642694">
        <id>Q8BP92</id>
        <label>Rcn2</label>
    </interactant>
    <organismsDiffer>false</organismsDiffer>
    <experiments>3</experiments>
</comment>
<comment type="subcellular location">
    <subcellularLocation>
        <location evidence="1">Nucleus</location>
    </subcellularLocation>
    <subcellularLocation>
        <location evidence="1">Cytoplasm</location>
    </subcellularLocation>
</comment>
<comment type="alternative products">
    <event type="alternative splicing"/>
    <isoform>
        <id>Q7TNL3-1</id>
        <name>1</name>
        <sequence type="displayed"/>
    </isoform>
    <isoform>
        <id>Q7TNL3-2</id>
        <name>2</name>
        <sequence type="described" ref="VSP_020901"/>
    </isoform>
</comment>
<comment type="similarity">
    <text evidence="5">Belongs to the protein kinase superfamily. CAMK Ser/Thr protein kinase family.</text>
</comment>
<comment type="sequence caution" evidence="5">
    <conflict type="erroneous initiation">
        <sequence resource="EMBL-CDS" id="AAH46981"/>
    </conflict>
</comment>
<reference key="1">
    <citation type="submission" date="2003-07" db="EMBL/GenBank/DDBJ databases">
        <title>Cloning and characterization of human, mouse, rat, chick and frog lyk4 gene.</title>
        <authorList>
            <person name="Shan Y.X."/>
            <person name="Yu L."/>
        </authorList>
    </citation>
    <scope>NUCLEOTIDE SEQUENCE [MRNA] (ISOFORM 1)</scope>
    <source>
        <strain>C57BL/6J</strain>
        <tissue>Brain</tissue>
    </source>
</reference>
<reference key="2">
    <citation type="journal article" date="2005" name="Brain Res. Mol. Brain Res.">
        <title>Gene expression profiling during the embryonic development of mouse brain using an oligonucleotide-based microarray system.</title>
        <authorList>
            <person name="Matsuki T."/>
            <person name="Hori G."/>
            <person name="Furuichi T."/>
        </authorList>
    </citation>
    <scope>NUCLEOTIDE SEQUENCE [MRNA]</scope>
    <source>
        <strain>ICR</strain>
        <tissue>Brain</tissue>
    </source>
</reference>
<reference key="3">
    <citation type="journal article" date="2005" name="Science">
        <title>The transcriptional landscape of the mammalian genome.</title>
        <authorList>
            <person name="Carninci P."/>
            <person name="Kasukawa T."/>
            <person name="Katayama S."/>
            <person name="Gough J."/>
            <person name="Frith M.C."/>
            <person name="Maeda N."/>
            <person name="Oyama R."/>
            <person name="Ravasi T."/>
            <person name="Lenhard B."/>
            <person name="Wells C."/>
            <person name="Kodzius R."/>
            <person name="Shimokawa K."/>
            <person name="Bajic V.B."/>
            <person name="Brenner S.E."/>
            <person name="Batalov S."/>
            <person name="Forrest A.R."/>
            <person name="Zavolan M."/>
            <person name="Davis M.J."/>
            <person name="Wilming L.G."/>
            <person name="Aidinis V."/>
            <person name="Allen J.E."/>
            <person name="Ambesi-Impiombato A."/>
            <person name="Apweiler R."/>
            <person name="Aturaliya R.N."/>
            <person name="Bailey T.L."/>
            <person name="Bansal M."/>
            <person name="Baxter L."/>
            <person name="Beisel K.W."/>
            <person name="Bersano T."/>
            <person name="Bono H."/>
            <person name="Chalk A.M."/>
            <person name="Chiu K.P."/>
            <person name="Choudhary V."/>
            <person name="Christoffels A."/>
            <person name="Clutterbuck D.R."/>
            <person name="Crowe M.L."/>
            <person name="Dalla E."/>
            <person name="Dalrymple B.P."/>
            <person name="de Bono B."/>
            <person name="Della Gatta G."/>
            <person name="di Bernardo D."/>
            <person name="Down T."/>
            <person name="Engstrom P."/>
            <person name="Fagiolini M."/>
            <person name="Faulkner G."/>
            <person name="Fletcher C.F."/>
            <person name="Fukushima T."/>
            <person name="Furuno M."/>
            <person name="Futaki S."/>
            <person name="Gariboldi M."/>
            <person name="Georgii-Hemming P."/>
            <person name="Gingeras T.R."/>
            <person name="Gojobori T."/>
            <person name="Green R.E."/>
            <person name="Gustincich S."/>
            <person name="Harbers M."/>
            <person name="Hayashi Y."/>
            <person name="Hensch T.K."/>
            <person name="Hirokawa N."/>
            <person name="Hill D."/>
            <person name="Huminiecki L."/>
            <person name="Iacono M."/>
            <person name="Ikeo K."/>
            <person name="Iwama A."/>
            <person name="Ishikawa T."/>
            <person name="Jakt M."/>
            <person name="Kanapin A."/>
            <person name="Katoh M."/>
            <person name="Kawasawa Y."/>
            <person name="Kelso J."/>
            <person name="Kitamura H."/>
            <person name="Kitano H."/>
            <person name="Kollias G."/>
            <person name="Krishnan S.P."/>
            <person name="Kruger A."/>
            <person name="Kummerfeld S.K."/>
            <person name="Kurochkin I.V."/>
            <person name="Lareau L.F."/>
            <person name="Lazarevic D."/>
            <person name="Lipovich L."/>
            <person name="Liu J."/>
            <person name="Liuni S."/>
            <person name="McWilliam S."/>
            <person name="Madan Babu M."/>
            <person name="Madera M."/>
            <person name="Marchionni L."/>
            <person name="Matsuda H."/>
            <person name="Matsuzawa S."/>
            <person name="Miki H."/>
            <person name="Mignone F."/>
            <person name="Miyake S."/>
            <person name="Morris K."/>
            <person name="Mottagui-Tabar S."/>
            <person name="Mulder N."/>
            <person name="Nakano N."/>
            <person name="Nakauchi H."/>
            <person name="Ng P."/>
            <person name="Nilsson R."/>
            <person name="Nishiguchi S."/>
            <person name="Nishikawa S."/>
            <person name="Nori F."/>
            <person name="Ohara O."/>
            <person name="Okazaki Y."/>
            <person name="Orlando V."/>
            <person name="Pang K.C."/>
            <person name="Pavan W.J."/>
            <person name="Pavesi G."/>
            <person name="Pesole G."/>
            <person name="Petrovsky N."/>
            <person name="Piazza S."/>
            <person name="Reed J."/>
            <person name="Reid J.F."/>
            <person name="Ring B.Z."/>
            <person name="Ringwald M."/>
            <person name="Rost B."/>
            <person name="Ruan Y."/>
            <person name="Salzberg S.L."/>
            <person name="Sandelin A."/>
            <person name="Schneider C."/>
            <person name="Schoenbach C."/>
            <person name="Sekiguchi K."/>
            <person name="Semple C.A."/>
            <person name="Seno S."/>
            <person name="Sessa L."/>
            <person name="Sheng Y."/>
            <person name="Shibata Y."/>
            <person name="Shimada H."/>
            <person name="Shimada K."/>
            <person name="Silva D."/>
            <person name="Sinclair B."/>
            <person name="Sperling S."/>
            <person name="Stupka E."/>
            <person name="Sugiura K."/>
            <person name="Sultana R."/>
            <person name="Takenaka Y."/>
            <person name="Taki K."/>
            <person name="Tammoja K."/>
            <person name="Tan S.L."/>
            <person name="Tang S."/>
            <person name="Taylor M.S."/>
            <person name="Tegner J."/>
            <person name="Teichmann S.A."/>
            <person name="Ueda H.R."/>
            <person name="van Nimwegen E."/>
            <person name="Verardo R."/>
            <person name="Wei C.L."/>
            <person name="Yagi K."/>
            <person name="Yamanishi H."/>
            <person name="Zabarovsky E."/>
            <person name="Zhu S."/>
            <person name="Zimmer A."/>
            <person name="Hide W."/>
            <person name="Bult C."/>
            <person name="Grimmond S.M."/>
            <person name="Teasdale R.D."/>
            <person name="Liu E.T."/>
            <person name="Brusic V."/>
            <person name="Quackenbush J."/>
            <person name="Wahlestedt C."/>
            <person name="Mattick J.S."/>
            <person name="Hume D.A."/>
            <person name="Kai C."/>
            <person name="Sasaki D."/>
            <person name="Tomaru Y."/>
            <person name="Fukuda S."/>
            <person name="Kanamori-Katayama M."/>
            <person name="Suzuki M."/>
            <person name="Aoki J."/>
            <person name="Arakawa T."/>
            <person name="Iida J."/>
            <person name="Imamura K."/>
            <person name="Itoh M."/>
            <person name="Kato T."/>
            <person name="Kawaji H."/>
            <person name="Kawagashira N."/>
            <person name="Kawashima T."/>
            <person name="Kojima M."/>
            <person name="Kondo S."/>
            <person name="Konno H."/>
            <person name="Nakano K."/>
            <person name="Ninomiya N."/>
            <person name="Nishio T."/>
            <person name="Okada M."/>
            <person name="Plessy C."/>
            <person name="Shibata K."/>
            <person name="Shiraki T."/>
            <person name="Suzuki S."/>
            <person name="Tagami M."/>
            <person name="Waki K."/>
            <person name="Watahiki A."/>
            <person name="Okamura-Oho Y."/>
            <person name="Suzuki H."/>
            <person name="Kawai J."/>
            <person name="Hayashizaki Y."/>
        </authorList>
    </citation>
    <scope>NUCLEOTIDE SEQUENCE [LARGE SCALE MRNA] (ISOFORM 2)</scope>
    <source>
        <strain>C57BL/6J</strain>
        <strain>ICR</strain>
        <strain>NOD</strain>
        <tissue>Brain</tissue>
        <tissue>Tongue</tissue>
    </source>
</reference>
<reference key="4">
    <citation type="journal article" date="2009" name="PLoS Biol.">
        <title>Lineage-specific biology revealed by a finished genome assembly of the mouse.</title>
        <authorList>
            <person name="Church D.M."/>
            <person name="Goodstadt L."/>
            <person name="Hillier L.W."/>
            <person name="Zody M.C."/>
            <person name="Goldstein S."/>
            <person name="She X."/>
            <person name="Bult C.J."/>
            <person name="Agarwala R."/>
            <person name="Cherry J.L."/>
            <person name="DiCuccio M."/>
            <person name="Hlavina W."/>
            <person name="Kapustin Y."/>
            <person name="Meric P."/>
            <person name="Maglott D."/>
            <person name="Birtle Z."/>
            <person name="Marques A.C."/>
            <person name="Graves T."/>
            <person name="Zhou S."/>
            <person name="Teague B."/>
            <person name="Potamousis K."/>
            <person name="Churas C."/>
            <person name="Place M."/>
            <person name="Herschleb J."/>
            <person name="Runnheim R."/>
            <person name="Forrest D."/>
            <person name="Amos-Landgraf J."/>
            <person name="Schwartz D.C."/>
            <person name="Cheng Z."/>
            <person name="Lindblad-Toh K."/>
            <person name="Eichler E.E."/>
            <person name="Ponting C.P."/>
        </authorList>
    </citation>
    <scope>NUCLEOTIDE SEQUENCE [LARGE SCALE GENOMIC DNA]</scope>
    <source>
        <strain>C57BL/6J</strain>
    </source>
</reference>
<reference key="5">
    <citation type="journal article" date="2004" name="Genome Res.">
        <title>The status, quality, and expansion of the NIH full-length cDNA project: the Mammalian Gene Collection (MGC).</title>
        <authorList>
            <consortium name="The MGC Project Team"/>
        </authorList>
    </citation>
    <scope>NUCLEOTIDE SEQUENCE [LARGE SCALE MRNA] (ISOFORM 1)</scope>
    <source>
        <strain>FVB/N</strain>
        <tissue>Colon</tissue>
    </source>
</reference>
<dbReference type="EC" id="2.7.11.1"/>
<dbReference type="EMBL" id="AY336057">
    <property type="protein sequence ID" value="AAQ01591.1"/>
    <property type="molecule type" value="mRNA"/>
</dbReference>
<dbReference type="EMBL" id="AB102946">
    <property type="protein sequence ID" value="BAC81568.1"/>
    <property type="molecule type" value="mRNA"/>
</dbReference>
<dbReference type="EMBL" id="AK009154">
    <property type="protein sequence ID" value="BAB26110.2"/>
    <property type="molecule type" value="mRNA"/>
</dbReference>
<dbReference type="EMBL" id="AK050808">
    <property type="protein sequence ID" value="BAC34419.2"/>
    <property type="molecule type" value="mRNA"/>
</dbReference>
<dbReference type="EMBL" id="AK154780">
    <property type="protein sequence ID" value="BAE32823.1"/>
    <property type="molecule type" value="mRNA"/>
</dbReference>
<dbReference type="EMBL" id="AL731780">
    <property type="status" value="NOT_ANNOTATED_CDS"/>
    <property type="molecule type" value="Genomic_DNA"/>
</dbReference>
<dbReference type="EMBL" id="BC046981">
    <property type="protein sequence ID" value="AAH46981.1"/>
    <property type="status" value="ALT_INIT"/>
    <property type="molecule type" value="mRNA"/>
</dbReference>
<dbReference type="CCDS" id="CCDS51299.1">
    <molecule id="Q7TNL3-2"/>
</dbReference>
<dbReference type="CCDS" id="CCDS51300.1">
    <molecule id="Q7TNL3-1"/>
</dbReference>
<dbReference type="RefSeq" id="NP_001139299.1">
    <molecule id="Q7TNL3-2"/>
    <property type="nucleotide sequence ID" value="NM_001145827.1"/>
</dbReference>
<dbReference type="RefSeq" id="NP_083076.3">
    <molecule id="Q7TNL3-1"/>
    <property type="nucleotide sequence ID" value="NM_028800.3"/>
</dbReference>
<dbReference type="RefSeq" id="XP_006503504.1">
    <molecule id="Q7TNL3-2"/>
    <property type="nucleotide sequence ID" value="XM_006503441.5"/>
</dbReference>
<dbReference type="RefSeq" id="XP_006503505.1">
    <molecule id="Q7TNL3-1"/>
    <property type="nucleotide sequence ID" value="XM_006503442.3"/>
</dbReference>
<dbReference type="RefSeq" id="XP_017175903.1">
    <molecule id="Q7TNL3-1"/>
    <property type="nucleotide sequence ID" value="XM_017320414.3"/>
</dbReference>
<dbReference type="RefSeq" id="XP_036020388.1">
    <molecule id="Q7TNL3-1"/>
    <property type="nucleotide sequence ID" value="XM_036164495.1"/>
</dbReference>
<dbReference type="SMR" id="Q7TNL3"/>
<dbReference type="DIP" id="DIP-58526N"/>
<dbReference type="FunCoup" id="Q7TNL3">
    <property type="interactions" value="2256"/>
</dbReference>
<dbReference type="IntAct" id="Q7TNL3">
    <property type="interactions" value="1"/>
</dbReference>
<dbReference type="STRING" id="10090.ENSMUSP00000111990"/>
<dbReference type="iPTMnet" id="Q7TNL3"/>
<dbReference type="PhosphoSitePlus" id="Q7TNL3"/>
<dbReference type="PaxDb" id="10090-ENSMUSP00000092354"/>
<dbReference type="ProteomicsDB" id="257454">
    <molecule id="Q7TNL3-1"/>
</dbReference>
<dbReference type="ProteomicsDB" id="257455">
    <molecule id="Q7TNL3-2"/>
</dbReference>
<dbReference type="Antibodypedia" id="2156">
    <property type="antibodies" value="150 antibodies from 29 providers"/>
</dbReference>
<dbReference type="DNASU" id="74178"/>
<dbReference type="Ensembl" id="ENSMUST00000094761.11">
    <molecule id="Q7TNL3-1"/>
    <property type="protein sequence ID" value="ENSMUSP00000092354.5"/>
    <property type="gene ID" value="ENSMUSG00000042608.16"/>
</dbReference>
<dbReference type="Ensembl" id="ENSMUST00000116286.9">
    <molecule id="Q7TNL3-2"/>
    <property type="protein sequence ID" value="ENSMUSP00000111990.3"/>
    <property type="gene ID" value="ENSMUSG00000042608.16"/>
</dbReference>
<dbReference type="GeneID" id="74178"/>
<dbReference type="KEGG" id="mmu:74178"/>
<dbReference type="UCSC" id="uc008usl.2">
    <molecule id="Q7TNL3-1"/>
    <property type="organism name" value="mouse"/>
</dbReference>
<dbReference type="UCSC" id="uc008usm.2">
    <molecule id="Q7TNL3-2"/>
    <property type="organism name" value="mouse"/>
</dbReference>
<dbReference type="AGR" id="MGI:1921428"/>
<dbReference type="CTD" id="83931"/>
<dbReference type="MGI" id="MGI:1921428">
    <property type="gene designation" value="Stk40"/>
</dbReference>
<dbReference type="VEuPathDB" id="HostDB:ENSMUSG00000042608"/>
<dbReference type="eggNOG" id="KOG0583">
    <property type="taxonomic scope" value="Eukaryota"/>
</dbReference>
<dbReference type="GeneTree" id="ENSGT00950000182986"/>
<dbReference type="HOGENOM" id="CLU_035107_0_0_1"/>
<dbReference type="InParanoid" id="Q7TNL3"/>
<dbReference type="OrthoDB" id="38984at9989"/>
<dbReference type="PhylomeDB" id="Q7TNL3"/>
<dbReference type="TreeFam" id="TF329785"/>
<dbReference type="BioGRID-ORCS" id="74178">
    <property type="hits" value="1 hit in 82 CRISPR screens"/>
</dbReference>
<dbReference type="ChiTaRS" id="Stk40">
    <property type="organism name" value="mouse"/>
</dbReference>
<dbReference type="PRO" id="PR:Q7TNL3"/>
<dbReference type="Proteomes" id="UP000000589">
    <property type="component" value="Chromosome 4"/>
</dbReference>
<dbReference type="RNAct" id="Q7TNL3">
    <property type="molecule type" value="protein"/>
</dbReference>
<dbReference type="Bgee" id="ENSMUSG00000042608">
    <property type="expression patterns" value="Expressed in ileal epithelium and 228 other cell types or tissues"/>
</dbReference>
<dbReference type="ExpressionAtlas" id="Q7TNL3">
    <property type="expression patterns" value="baseline and differential"/>
</dbReference>
<dbReference type="GO" id="GO:0005829">
    <property type="term" value="C:cytosol"/>
    <property type="evidence" value="ECO:0007669"/>
    <property type="project" value="Ensembl"/>
</dbReference>
<dbReference type="GO" id="GO:0005654">
    <property type="term" value="C:nucleoplasm"/>
    <property type="evidence" value="ECO:0007669"/>
    <property type="project" value="Ensembl"/>
</dbReference>
<dbReference type="GO" id="GO:0005524">
    <property type="term" value="F:ATP binding"/>
    <property type="evidence" value="ECO:0007669"/>
    <property type="project" value="UniProtKB-KW"/>
</dbReference>
<dbReference type="GO" id="GO:0106310">
    <property type="term" value="F:protein serine kinase activity"/>
    <property type="evidence" value="ECO:0007669"/>
    <property type="project" value="RHEA"/>
</dbReference>
<dbReference type="GO" id="GO:0004674">
    <property type="term" value="F:protein serine/threonine kinase activity"/>
    <property type="evidence" value="ECO:0007669"/>
    <property type="project" value="UniProtKB-KW"/>
</dbReference>
<dbReference type="GO" id="GO:0005977">
    <property type="term" value="P:glycogen metabolic process"/>
    <property type="evidence" value="ECO:0000315"/>
    <property type="project" value="MGI"/>
</dbReference>
<dbReference type="GO" id="GO:0048286">
    <property type="term" value="P:lung alveolus development"/>
    <property type="evidence" value="ECO:0000315"/>
    <property type="project" value="MGI"/>
</dbReference>
<dbReference type="GO" id="GO:0030324">
    <property type="term" value="P:lung development"/>
    <property type="evidence" value="ECO:0000315"/>
    <property type="project" value="MGI"/>
</dbReference>
<dbReference type="GO" id="GO:0060425">
    <property type="term" value="P:lung morphogenesis"/>
    <property type="evidence" value="ECO:0000315"/>
    <property type="project" value="MGI"/>
</dbReference>
<dbReference type="GO" id="GO:0035264">
    <property type="term" value="P:multicellular organism growth"/>
    <property type="evidence" value="ECO:0000315"/>
    <property type="project" value="MGI"/>
</dbReference>
<dbReference type="GO" id="GO:0043066">
    <property type="term" value="P:negative regulation of apoptotic process"/>
    <property type="evidence" value="ECO:0000315"/>
    <property type="project" value="MGI"/>
</dbReference>
<dbReference type="GO" id="GO:0010468">
    <property type="term" value="P:regulation of gene expression"/>
    <property type="evidence" value="ECO:0000315"/>
    <property type="project" value="MGI"/>
</dbReference>
<dbReference type="GO" id="GO:0043408">
    <property type="term" value="P:regulation of MAPK cascade"/>
    <property type="evidence" value="ECO:0000315"/>
    <property type="project" value="MGI"/>
</dbReference>
<dbReference type="GO" id="GO:0003016">
    <property type="term" value="P:respiratory system process"/>
    <property type="evidence" value="ECO:0000315"/>
    <property type="project" value="MGI"/>
</dbReference>
<dbReference type="CDD" id="cd13974">
    <property type="entry name" value="STKc_SHIK"/>
    <property type="match status" value="1"/>
</dbReference>
<dbReference type="FunFam" id="1.10.510.10:FF:000269">
    <property type="entry name" value="Serine/threonine-protein kinase 40"/>
    <property type="match status" value="1"/>
</dbReference>
<dbReference type="Gene3D" id="1.10.510.10">
    <property type="entry name" value="Transferase(Phosphotransferase) domain 1"/>
    <property type="match status" value="1"/>
</dbReference>
<dbReference type="InterPro" id="IPR011009">
    <property type="entry name" value="Kinase-like_dom_sf"/>
</dbReference>
<dbReference type="InterPro" id="IPR000719">
    <property type="entry name" value="Prot_kinase_dom"/>
</dbReference>
<dbReference type="InterPro" id="IPR024236">
    <property type="entry name" value="Ser/Thr_kinase_40"/>
</dbReference>
<dbReference type="InterPro" id="IPR008271">
    <property type="entry name" value="Ser/Thr_kinase_AS"/>
</dbReference>
<dbReference type="InterPro" id="IPR024104">
    <property type="entry name" value="Tribbles/Ser_Thr_kinase_40"/>
</dbReference>
<dbReference type="PANTHER" id="PTHR22961">
    <property type="entry name" value="SER/THR PROTEIN KINASE-TRB"/>
    <property type="match status" value="1"/>
</dbReference>
<dbReference type="PANTHER" id="PTHR22961:SF16">
    <property type="entry name" value="SERINE_THREONINE-PROTEIN KINASE 40"/>
    <property type="match status" value="1"/>
</dbReference>
<dbReference type="Pfam" id="PF00069">
    <property type="entry name" value="Pkinase"/>
    <property type="match status" value="1"/>
</dbReference>
<dbReference type="SMART" id="SM00220">
    <property type="entry name" value="S_TKc"/>
    <property type="match status" value="1"/>
</dbReference>
<dbReference type="SUPFAM" id="SSF56112">
    <property type="entry name" value="Protein kinase-like (PK-like)"/>
    <property type="match status" value="1"/>
</dbReference>
<dbReference type="PROSITE" id="PS50011">
    <property type="entry name" value="PROTEIN_KINASE_DOM"/>
    <property type="match status" value="1"/>
</dbReference>
<dbReference type="PROSITE" id="PS00108">
    <property type="entry name" value="PROTEIN_KINASE_ST"/>
    <property type="match status" value="1"/>
</dbReference>
<keyword id="KW-0025">Alternative splicing</keyword>
<keyword id="KW-0067">ATP-binding</keyword>
<keyword id="KW-0963">Cytoplasm</keyword>
<keyword id="KW-0418">Kinase</keyword>
<keyword id="KW-0547">Nucleotide-binding</keyword>
<keyword id="KW-0539">Nucleus</keyword>
<keyword id="KW-1185">Reference proteome</keyword>
<keyword id="KW-0723">Serine/threonine-protein kinase</keyword>
<keyword id="KW-0808">Transferase</keyword>
<name>STK40_MOUSE</name>
<sequence>MKRRASDRGAGETSANAKALGTGIAGNNAKRAGPFVLGPRLGNSPVPSIVQCLARKDGTDDFYQLKILTLEERGEQGIESQEERQGKMLLHTEYSLLSLLHTQDGVVHHHGLFQDRTCEAVEDTESGRMVKKMKKRICLVLDCLCAHDFSDKTADLINLQHYVIKEKRLSERETVVIFYDVVRVVEALHQKNIVHRDLKLGNMVLNKRTHRITITNFCLGKHLVSEGDLLKDQRGSPAYISPDVLSGRPYRGKPSDMWALGVVLFTMLYGQFPFYDSIPQELFRKIKAAEYTIPEDGRVSENTVCLIRKLLVLDPQQRLAAADVLEALSAIIASWQSLSSLSGPLQVVPDIDDQMSSSDSSQEAKVTEECSQYEFENYMRQQLLLAEEKSSIHEARAWVPKRQFGSMPPVRRLGHDAQPMTSLDTAILAQRYLRK</sequence>
<feature type="chain" id="PRO_0000252262" description="Serine/threonine-protein kinase 40">
    <location>
        <begin position="1"/>
        <end position="435"/>
    </location>
</feature>
<feature type="domain" description="Protein kinase" evidence="2">
    <location>
        <begin position="35"/>
        <end position="332"/>
    </location>
</feature>
<feature type="active site" description="Proton acceptor" evidence="2 3">
    <location>
        <position position="197"/>
    </location>
</feature>
<feature type="binding site" evidence="2">
    <location>
        <begin position="41"/>
        <end position="49"/>
    </location>
    <ligand>
        <name>ATP</name>
        <dbReference type="ChEBI" id="CHEBI:30616"/>
    </ligand>
</feature>
<feature type="binding site" evidence="2">
    <location>
        <position position="66"/>
    </location>
    <ligand>
        <name>ATP</name>
        <dbReference type="ChEBI" id="CHEBI:30616"/>
    </ligand>
</feature>
<feature type="splice variant" id="VSP_020901" description="In isoform 2." evidence="4">
    <original>M</original>
    <variation>MKPYLRGASTQELRM</variation>
    <location>
        <position position="1"/>
    </location>
</feature>
<feature type="sequence conflict" description="In Ref. 3; BAB26110." evidence="5" ref="3">
    <original>R</original>
    <variation>L</variation>
    <location>
        <position position="196"/>
    </location>
</feature>
<feature type="sequence conflict" description="In Ref. 3; BAB26110." evidence="5" ref="3">
    <original>I</original>
    <variation>V</variation>
    <location>
        <position position="392"/>
    </location>
</feature>
<organism>
    <name type="scientific">Mus musculus</name>
    <name type="common">Mouse</name>
    <dbReference type="NCBI Taxonomy" id="10090"/>
    <lineage>
        <taxon>Eukaryota</taxon>
        <taxon>Metazoa</taxon>
        <taxon>Chordata</taxon>
        <taxon>Craniata</taxon>
        <taxon>Vertebrata</taxon>
        <taxon>Euteleostomi</taxon>
        <taxon>Mammalia</taxon>
        <taxon>Eutheria</taxon>
        <taxon>Euarchontoglires</taxon>
        <taxon>Glires</taxon>
        <taxon>Rodentia</taxon>
        <taxon>Myomorpha</taxon>
        <taxon>Muroidea</taxon>
        <taxon>Muridae</taxon>
        <taxon>Murinae</taxon>
        <taxon>Mus</taxon>
        <taxon>Mus</taxon>
    </lineage>
</organism>
<protein>
    <recommendedName>
        <fullName>Serine/threonine-protein kinase 40</fullName>
        <ecNumber>2.7.11.1</ecNumber>
    </recommendedName>
    <alternativeName>
        <fullName>Serine/threonine-protein kinase lyk4</fullName>
    </alternativeName>
</protein>
<gene>
    <name type="primary">Stk40</name>
    <name type="synonym">Lyk4</name>
</gene>
<proteinExistence type="evidence at protein level"/>